<protein>
    <recommendedName>
        <fullName evidence="1">Acetylornithine aminotransferase</fullName>
        <shortName evidence="1">ACOAT</shortName>
        <ecNumber evidence="1">2.6.1.11</ecNumber>
    </recommendedName>
</protein>
<keyword id="KW-0028">Amino-acid biosynthesis</keyword>
<keyword id="KW-0032">Aminotransferase</keyword>
<keyword id="KW-0055">Arginine biosynthesis</keyword>
<keyword id="KW-0963">Cytoplasm</keyword>
<keyword id="KW-0663">Pyridoxal phosphate</keyword>
<keyword id="KW-1185">Reference proteome</keyword>
<keyword id="KW-0808">Transferase</keyword>
<name>ARGD_METTH</name>
<accession>O27392</accession>
<gene>
    <name evidence="1" type="primary">argD</name>
    <name type="ordered locus">MTH_1337</name>
</gene>
<evidence type="ECO:0000255" key="1">
    <source>
        <dbReference type="HAMAP-Rule" id="MF_01107"/>
    </source>
</evidence>
<dbReference type="EC" id="2.6.1.11" evidence="1"/>
<dbReference type="EMBL" id="AE000666">
    <property type="protein sequence ID" value="AAB85815.1"/>
    <property type="molecule type" value="Genomic_DNA"/>
</dbReference>
<dbReference type="PIR" id="G69044">
    <property type="entry name" value="G69044"/>
</dbReference>
<dbReference type="RefSeq" id="WP_010876950.1">
    <property type="nucleotide sequence ID" value="NC_000916.1"/>
</dbReference>
<dbReference type="SMR" id="O27392"/>
<dbReference type="FunCoup" id="O27392">
    <property type="interactions" value="182"/>
</dbReference>
<dbReference type="STRING" id="187420.MTH_1337"/>
<dbReference type="PaxDb" id="187420-MTH_1337"/>
<dbReference type="EnsemblBacteria" id="AAB85815">
    <property type="protein sequence ID" value="AAB85815"/>
    <property type="gene ID" value="MTH_1337"/>
</dbReference>
<dbReference type="GeneID" id="1471054"/>
<dbReference type="KEGG" id="mth:MTH_1337"/>
<dbReference type="PATRIC" id="fig|187420.15.peg.1303"/>
<dbReference type="HOGENOM" id="CLU_016922_10_1_2"/>
<dbReference type="InParanoid" id="O27392"/>
<dbReference type="UniPathway" id="UPA00068">
    <property type="reaction ID" value="UER00109"/>
</dbReference>
<dbReference type="Proteomes" id="UP000005223">
    <property type="component" value="Chromosome"/>
</dbReference>
<dbReference type="GO" id="GO:0005737">
    <property type="term" value="C:cytoplasm"/>
    <property type="evidence" value="ECO:0007669"/>
    <property type="project" value="UniProtKB-SubCell"/>
</dbReference>
<dbReference type="GO" id="GO:0042802">
    <property type="term" value="F:identical protein binding"/>
    <property type="evidence" value="ECO:0007669"/>
    <property type="project" value="TreeGrafter"/>
</dbReference>
<dbReference type="GO" id="GO:0003992">
    <property type="term" value="F:N2-acetyl-L-ornithine:2-oxoglutarate 5-aminotransferase activity"/>
    <property type="evidence" value="ECO:0007669"/>
    <property type="project" value="UniProtKB-UniRule"/>
</dbReference>
<dbReference type="GO" id="GO:0030170">
    <property type="term" value="F:pyridoxal phosphate binding"/>
    <property type="evidence" value="ECO:0007669"/>
    <property type="project" value="InterPro"/>
</dbReference>
<dbReference type="GO" id="GO:0006526">
    <property type="term" value="P:L-arginine biosynthetic process"/>
    <property type="evidence" value="ECO:0007669"/>
    <property type="project" value="UniProtKB-UniRule"/>
</dbReference>
<dbReference type="CDD" id="cd00610">
    <property type="entry name" value="OAT_like"/>
    <property type="match status" value="1"/>
</dbReference>
<dbReference type="FunFam" id="3.40.640.10:FF:000004">
    <property type="entry name" value="Acetylornithine aminotransferase"/>
    <property type="match status" value="1"/>
</dbReference>
<dbReference type="Gene3D" id="3.90.1150.10">
    <property type="entry name" value="Aspartate Aminotransferase, domain 1"/>
    <property type="match status" value="1"/>
</dbReference>
<dbReference type="Gene3D" id="3.40.640.10">
    <property type="entry name" value="Type I PLP-dependent aspartate aminotransferase-like (Major domain)"/>
    <property type="match status" value="1"/>
</dbReference>
<dbReference type="HAMAP" id="MF_01107">
    <property type="entry name" value="ArgD_aminotrans_3"/>
    <property type="match status" value="1"/>
</dbReference>
<dbReference type="InterPro" id="IPR004636">
    <property type="entry name" value="AcOrn/SuccOrn_fam"/>
</dbReference>
<dbReference type="InterPro" id="IPR005814">
    <property type="entry name" value="Aminotrans_3"/>
</dbReference>
<dbReference type="InterPro" id="IPR049704">
    <property type="entry name" value="Aminotrans_3_PPA_site"/>
</dbReference>
<dbReference type="InterPro" id="IPR050103">
    <property type="entry name" value="Class-III_PLP-dep_AT"/>
</dbReference>
<dbReference type="InterPro" id="IPR015424">
    <property type="entry name" value="PyrdxlP-dep_Trfase"/>
</dbReference>
<dbReference type="InterPro" id="IPR015421">
    <property type="entry name" value="PyrdxlP-dep_Trfase_major"/>
</dbReference>
<dbReference type="InterPro" id="IPR015422">
    <property type="entry name" value="PyrdxlP-dep_Trfase_small"/>
</dbReference>
<dbReference type="NCBIfam" id="TIGR00707">
    <property type="entry name" value="argD"/>
    <property type="match status" value="1"/>
</dbReference>
<dbReference type="NCBIfam" id="NF002325">
    <property type="entry name" value="PRK01278.1"/>
    <property type="match status" value="1"/>
</dbReference>
<dbReference type="NCBIfam" id="NF002874">
    <property type="entry name" value="PRK03244.1"/>
    <property type="match status" value="1"/>
</dbReference>
<dbReference type="PANTHER" id="PTHR11986:SF79">
    <property type="entry name" value="ACETYLORNITHINE AMINOTRANSFERASE, MITOCHONDRIAL"/>
    <property type="match status" value="1"/>
</dbReference>
<dbReference type="PANTHER" id="PTHR11986">
    <property type="entry name" value="AMINOTRANSFERASE CLASS III"/>
    <property type="match status" value="1"/>
</dbReference>
<dbReference type="Pfam" id="PF00202">
    <property type="entry name" value="Aminotran_3"/>
    <property type="match status" value="1"/>
</dbReference>
<dbReference type="PIRSF" id="PIRSF000521">
    <property type="entry name" value="Transaminase_4ab_Lys_Orn"/>
    <property type="match status" value="1"/>
</dbReference>
<dbReference type="SUPFAM" id="SSF53383">
    <property type="entry name" value="PLP-dependent transferases"/>
    <property type="match status" value="1"/>
</dbReference>
<dbReference type="PROSITE" id="PS00600">
    <property type="entry name" value="AA_TRANSFER_CLASS_3"/>
    <property type="match status" value="1"/>
</dbReference>
<sequence>MDSEEIIELERKFIMQTYTRQPIVLSHGKGATVWDIEGNSYIDCFAGVAVNSIGHAHPKVALAICHQAQRLIHSSNIYYTREQVELAKLLTAISPHDRVFFANSGAEANEGAIKLARKFTGKSEIIAAENSFHGRTLATVTATGQKKYSEPFRPLPEGFKHVPYGDIGAMADAVGDETAAIILEPVQGEGGVIIPPEGYLKDVQELARQNDVLLILDEVQTGFGRTGAMFASQLFGVEPDITTVAKAMGGGYPIGAVLANERVAMAFEPGDHGSTFGGNPWGCAAAIATIEVLMDEKLPERAAKMGSYFLGRLRQVLHGCDAVRDIRGVGLMIGIEIDGECAGVVDAAREMGVLINCTAGKVIRIVPPLVIKKEEIDAAVDVLGHVISDL</sequence>
<organism>
    <name type="scientific">Methanothermobacter thermautotrophicus (strain ATCC 29096 / DSM 1053 / JCM 10044 / NBRC 100330 / Delta H)</name>
    <name type="common">Methanobacterium thermoautotrophicum</name>
    <dbReference type="NCBI Taxonomy" id="187420"/>
    <lineage>
        <taxon>Archaea</taxon>
        <taxon>Methanobacteriati</taxon>
        <taxon>Methanobacteriota</taxon>
        <taxon>Methanomada group</taxon>
        <taxon>Methanobacteria</taxon>
        <taxon>Methanobacteriales</taxon>
        <taxon>Methanobacteriaceae</taxon>
        <taxon>Methanothermobacter</taxon>
    </lineage>
</organism>
<proteinExistence type="inferred from homology"/>
<reference key="1">
    <citation type="journal article" date="1997" name="J. Bacteriol.">
        <title>Complete genome sequence of Methanobacterium thermoautotrophicum deltaH: functional analysis and comparative genomics.</title>
        <authorList>
            <person name="Smith D.R."/>
            <person name="Doucette-Stamm L.A."/>
            <person name="Deloughery C."/>
            <person name="Lee H.-M."/>
            <person name="Dubois J."/>
            <person name="Aldredge T."/>
            <person name="Bashirzadeh R."/>
            <person name="Blakely D."/>
            <person name="Cook R."/>
            <person name="Gilbert K."/>
            <person name="Harrison D."/>
            <person name="Hoang L."/>
            <person name="Keagle P."/>
            <person name="Lumm W."/>
            <person name="Pothier B."/>
            <person name="Qiu D."/>
            <person name="Spadafora R."/>
            <person name="Vicare R."/>
            <person name="Wang Y."/>
            <person name="Wierzbowski J."/>
            <person name="Gibson R."/>
            <person name="Jiwani N."/>
            <person name="Caruso A."/>
            <person name="Bush D."/>
            <person name="Safer H."/>
            <person name="Patwell D."/>
            <person name="Prabhakar S."/>
            <person name="McDougall S."/>
            <person name="Shimer G."/>
            <person name="Goyal A."/>
            <person name="Pietrovski S."/>
            <person name="Church G.M."/>
            <person name="Daniels C.J."/>
            <person name="Mao J.-I."/>
            <person name="Rice P."/>
            <person name="Noelling J."/>
            <person name="Reeve J.N."/>
        </authorList>
    </citation>
    <scope>NUCLEOTIDE SEQUENCE [LARGE SCALE GENOMIC DNA]</scope>
    <source>
        <strain>ATCC 29096 / DSM 1053 / JCM 10044 / NBRC 100330 / Delta H</strain>
    </source>
</reference>
<comment type="catalytic activity">
    <reaction evidence="1">
        <text>N(2)-acetyl-L-ornithine + 2-oxoglutarate = N-acetyl-L-glutamate 5-semialdehyde + L-glutamate</text>
        <dbReference type="Rhea" id="RHEA:18049"/>
        <dbReference type="ChEBI" id="CHEBI:16810"/>
        <dbReference type="ChEBI" id="CHEBI:29123"/>
        <dbReference type="ChEBI" id="CHEBI:29985"/>
        <dbReference type="ChEBI" id="CHEBI:57805"/>
        <dbReference type="EC" id="2.6.1.11"/>
    </reaction>
</comment>
<comment type="cofactor">
    <cofactor evidence="1">
        <name>pyridoxal 5'-phosphate</name>
        <dbReference type="ChEBI" id="CHEBI:597326"/>
    </cofactor>
    <text evidence="1">Binds 1 pyridoxal phosphate per subunit.</text>
</comment>
<comment type="pathway">
    <text evidence="1">Amino-acid biosynthesis; L-arginine biosynthesis; N(2)-acetyl-L-ornithine from L-glutamate: step 4/4.</text>
</comment>
<comment type="subunit">
    <text evidence="1">Homodimer.</text>
</comment>
<comment type="subcellular location">
    <subcellularLocation>
        <location evidence="1">Cytoplasm</location>
    </subcellularLocation>
</comment>
<comment type="miscellaneous">
    <text evidence="1">May also have succinyldiaminopimelate aminotransferase activity, thus carrying out the corresponding step in lysine biosynthesis.</text>
</comment>
<comment type="similarity">
    <text evidence="1">Belongs to the class-III pyridoxal-phosphate-dependent aminotransferase family. ArgD subfamily.</text>
</comment>
<feature type="chain" id="PRO_0000112824" description="Acetylornithine aminotransferase">
    <location>
        <begin position="1"/>
        <end position="390"/>
    </location>
</feature>
<feature type="binding site" evidence="1">
    <location>
        <begin position="105"/>
        <end position="106"/>
    </location>
    <ligand>
        <name>pyridoxal 5'-phosphate</name>
        <dbReference type="ChEBI" id="CHEBI:597326"/>
    </ligand>
</feature>
<feature type="binding site" evidence="1">
    <location>
        <position position="132"/>
    </location>
    <ligand>
        <name>pyridoxal 5'-phosphate</name>
        <dbReference type="ChEBI" id="CHEBI:597326"/>
    </ligand>
</feature>
<feature type="binding site" evidence="1">
    <location>
        <position position="135"/>
    </location>
    <ligand>
        <name>N(2)-acetyl-L-ornithine</name>
        <dbReference type="ChEBI" id="CHEBI:57805"/>
    </ligand>
</feature>
<feature type="binding site" evidence="1">
    <location>
        <begin position="217"/>
        <end position="220"/>
    </location>
    <ligand>
        <name>pyridoxal 5'-phosphate</name>
        <dbReference type="ChEBI" id="CHEBI:597326"/>
    </ligand>
</feature>
<feature type="binding site" evidence="1">
    <location>
        <position position="274"/>
    </location>
    <ligand>
        <name>N(2)-acetyl-L-ornithine</name>
        <dbReference type="ChEBI" id="CHEBI:57805"/>
    </ligand>
</feature>
<feature type="binding site" evidence="1">
    <location>
        <position position="275"/>
    </location>
    <ligand>
        <name>pyridoxal 5'-phosphate</name>
        <dbReference type="ChEBI" id="CHEBI:597326"/>
    </ligand>
</feature>
<feature type="modified residue" description="N6-(pyridoxal phosphate)lysine" evidence="1">
    <location>
        <position position="246"/>
    </location>
</feature>